<name>PETL_CITSI</name>
<accession>Q09MG0</accession>
<protein>
    <recommendedName>
        <fullName evidence="1">Cytochrome b6-f complex subunit 6</fullName>
    </recommendedName>
    <alternativeName>
        <fullName evidence="1">Cytochrome b6-f complex subunit PetL</fullName>
    </alternativeName>
    <alternativeName>
        <fullName evidence="1">Cytochrome b6-f complex subunit VI</fullName>
    </alternativeName>
</protein>
<proteinExistence type="inferred from homology"/>
<keyword id="KW-0150">Chloroplast</keyword>
<keyword id="KW-0249">Electron transport</keyword>
<keyword id="KW-0472">Membrane</keyword>
<keyword id="KW-0602">Photosynthesis</keyword>
<keyword id="KW-0934">Plastid</keyword>
<keyword id="KW-0793">Thylakoid</keyword>
<keyword id="KW-0812">Transmembrane</keyword>
<keyword id="KW-1133">Transmembrane helix</keyword>
<keyword id="KW-0813">Transport</keyword>
<geneLocation type="chloroplast"/>
<evidence type="ECO:0000255" key="1">
    <source>
        <dbReference type="HAMAP-Rule" id="MF_00433"/>
    </source>
</evidence>
<sequence length="31" mass="3274">MPTITSYFGFLLAALTITSALFIGLSKIGLI</sequence>
<comment type="function">
    <text evidence="1">Component of the cytochrome b6-f complex, which mediates electron transfer between photosystem II (PSII) and photosystem I (PSI), cyclic electron flow around PSI, and state transitions. PetL is important for photoautotrophic growth as well as for electron transfer efficiency and stability of the cytochrome b6-f complex.</text>
</comment>
<comment type="subunit">
    <text evidence="1">The 4 large subunits of the cytochrome b6-f complex are cytochrome b6, subunit IV (17 kDa polypeptide, PetD), cytochrome f and the Rieske protein, while the 4 small subunits are PetG, PetL, PetM and PetN. The complex functions as a dimer.</text>
</comment>
<comment type="subcellular location">
    <subcellularLocation>
        <location evidence="1">Plastid</location>
        <location evidence="1">Chloroplast thylakoid membrane</location>
        <topology evidence="1">Single-pass membrane protein</topology>
    </subcellularLocation>
</comment>
<comment type="similarity">
    <text evidence="1">Belongs to the PetL family.</text>
</comment>
<gene>
    <name evidence="1" type="primary">petL</name>
</gene>
<dbReference type="EMBL" id="DQ864733">
    <property type="protein sequence ID" value="ABI49038.1"/>
    <property type="molecule type" value="Genomic_DNA"/>
</dbReference>
<dbReference type="RefSeq" id="YP_740493.1">
    <property type="nucleotide sequence ID" value="NC_008334.1"/>
</dbReference>
<dbReference type="SMR" id="Q09MG0"/>
<dbReference type="GeneID" id="4271116"/>
<dbReference type="KEGG" id="cit:4271116"/>
<dbReference type="OrthoDB" id="800571at71240"/>
<dbReference type="GO" id="GO:0009535">
    <property type="term" value="C:chloroplast thylakoid membrane"/>
    <property type="evidence" value="ECO:0007669"/>
    <property type="project" value="UniProtKB-SubCell"/>
</dbReference>
<dbReference type="GO" id="GO:0009512">
    <property type="term" value="C:cytochrome b6f complex"/>
    <property type="evidence" value="ECO:0007669"/>
    <property type="project" value="InterPro"/>
</dbReference>
<dbReference type="GO" id="GO:0045158">
    <property type="term" value="F:electron transporter, transferring electrons within cytochrome b6/f complex of photosystem II activity"/>
    <property type="evidence" value="ECO:0007669"/>
    <property type="project" value="UniProtKB-UniRule"/>
</dbReference>
<dbReference type="GO" id="GO:0015979">
    <property type="term" value="P:photosynthesis"/>
    <property type="evidence" value="ECO:0007669"/>
    <property type="project" value="UniProtKB-KW"/>
</dbReference>
<dbReference type="HAMAP" id="MF_00433">
    <property type="entry name" value="Cytb6_f_PetL"/>
    <property type="match status" value="1"/>
</dbReference>
<dbReference type="InterPro" id="IPR007802">
    <property type="entry name" value="Cyt_b6/f_cplx_su6"/>
</dbReference>
<dbReference type="PANTHER" id="PTHR37266">
    <property type="entry name" value="CYTOCHROME B6-F COMPLEX SUBUNIT 6"/>
    <property type="match status" value="1"/>
</dbReference>
<dbReference type="PANTHER" id="PTHR37266:SF1">
    <property type="entry name" value="CYTOCHROME B6-F COMPLEX SUBUNIT 6"/>
    <property type="match status" value="1"/>
</dbReference>
<dbReference type="Pfam" id="PF05115">
    <property type="entry name" value="PetL"/>
    <property type="match status" value="1"/>
</dbReference>
<dbReference type="SUPFAM" id="SSF103436">
    <property type="entry name" value="PetL subunit of the cytochrome b6f complex"/>
    <property type="match status" value="1"/>
</dbReference>
<reference key="1">
    <citation type="journal article" date="2006" name="BMC Plant Biol.">
        <title>The complete chloroplast genome sequence of Citrus sinensis (L.) Osbeck var 'Ridge Pineapple': organization and phylogenetic relationships to other angiosperms.</title>
        <authorList>
            <person name="Bausher M.G."/>
            <person name="Singh N.D."/>
            <person name="Lee S.-B."/>
            <person name="Jansen R.K."/>
            <person name="Daniell H."/>
        </authorList>
    </citation>
    <scope>NUCLEOTIDE SEQUENCE [LARGE SCALE GENOMIC DNA]</scope>
    <source>
        <strain>cv. Osbeck var. Ridge Pineapple</strain>
    </source>
</reference>
<organism>
    <name type="scientific">Citrus sinensis</name>
    <name type="common">Sweet orange</name>
    <name type="synonym">Citrus aurantium var. sinensis</name>
    <dbReference type="NCBI Taxonomy" id="2711"/>
    <lineage>
        <taxon>Eukaryota</taxon>
        <taxon>Viridiplantae</taxon>
        <taxon>Streptophyta</taxon>
        <taxon>Embryophyta</taxon>
        <taxon>Tracheophyta</taxon>
        <taxon>Spermatophyta</taxon>
        <taxon>Magnoliopsida</taxon>
        <taxon>eudicotyledons</taxon>
        <taxon>Gunneridae</taxon>
        <taxon>Pentapetalae</taxon>
        <taxon>rosids</taxon>
        <taxon>malvids</taxon>
        <taxon>Sapindales</taxon>
        <taxon>Rutaceae</taxon>
        <taxon>Aurantioideae</taxon>
        <taxon>Citrus</taxon>
    </lineage>
</organism>
<feature type="chain" id="PRO_0000275521" description="Cytochrome b6-f complex subunit 6">
    <location>
        <begin position="1"/>
        <end position="31"/>
    </location>
</feature>
<feature type="transmembrane region" description="Helical" evidence="1">
    <location>
        <begin position="4"/>
        <end position="24"/>
    </location>
</feature>